<gene>
    <name type="ordered locus">Os01g0290600</name>
    <name type="ordered locus">LOC_Os01g18660</name>
    <name type="ORF">P0469E05.32</name>
    <name type="ORF">P0706B05.1</name>
</gene>
<organism>
    <name type="scientific">Oryza sativa subsp. japonica</name>
    <name type="common">Rice</name>
    <dbReference type="NCBI Taxonomy" id="39947"/>
    <lineage>
        <taxon>Eukaryota</taxon>
        <taxon>Viridiplantae</taxon>
        <taxon>Streptophyta</taxon>
        <taxon>Embryophyta</taxon>
        <taxon>Tracheophyta</taxon>
        <taxon>Spermatophyta</taxon>
        <taxon>Magnoliopsida</taxon>
        <taxon>Liliopsida</taxon>
        <taxon>Poales</taxon>
        <taxon>Poaceae</taxon>
        <taxon>BOP clade</taxon>
        <taxon>Oryzoideae</taxon>
        <taxon>Oryzeae</taxon>
        <taxon>Oryzinae</taxon>
        <taxon>Oryza</taxon>
        <taxon>Oryza sativa</taxon>
    </lineage>
</organism>
<protein>
    <recommendedName>
        <fullName>Putative L-cysteine desulfhydrase 2</fullName>
        <ecNumber>4.4.1.28</ecNumber>
    </recommendedName>
    <alternativeName>
        <fullName>OsL-CDes2</fullName>
        <shortName>L-CDes2</shortName>
    </alternativeName>
</protein>
<dbReference type="EC" id="4.4.1.28"/>
<dbReference type="EMBL" id="AP002480">
    <property type="protein sequence ID" value="BAD86870.1"/>
    <property type="molecule type" value="Genomic_DNA"/>
</dbReference>
<dbReference type="EMBL" id="AP002482">
    <property type="protein sequence ID" value="BAD86871.1"/>
    <property type="molecule type" value="Genomic_DNA"/>
</dbReference>
<dbReference type="EMBL" id="AP008207">
    <property type="protein sequence ID" value="BAF04702.2"/>
    <property type="molecule type" value="Genomic_DNA"/>
</dbReference>
<dbReference type="EMBL" id="AP014957">
    <property type="status" value="NOT_ANNOTATED_CDS"/>
    <property type="molecule type" value="Genomic_DNA"/>
</dbReference>
<dbReference type="SMR" id="Q5JNT6"/>
<dbReference type="FunCoup" id="Q5JNT6">
    <property type="interactions" value="833"/>
</dbReference>
<dbReference type="STRING" id="39947.Q5JNT6"/>
<dbReference type="PaxDb" id="39947-Q5JNT6"/>
<dbReference type="GeneID" id="4325157"/>
<dbReference type="KEGG" id="dosa:Os01g0290600"/>
<dbReference type="KEGG" id="osa:4325157"/>
<dbReference type="eggNOG" id="KOG1549">
    <property type="taxonomic scope" value="Eukaryota"/>
</dbReference>
<dbReference type="HOGENOM" id="CLU_003433_3_2_1"/>
<dbReference type="InParanoid" id="Q5JNT6"/>
<dbReference type="OrthoDB" id="5978656at2759"/>
<dbReference type="BRENDA" id="2.5.1.47">
    <property type="organism ID" value="8948"/>
</dbReference>
<dbReference type="PlantReactome" id="R-OSA-1119612">
    <property type="pathway name" value="Cysteine degradation"/>
</dbReference>
<dbReference type="Proteomes" id="UP000000763">
    <property type="component" value="Chromosome 1"/>
</dbReference>
<dbReference type="Proteomes" id="UP000059680">
    <property type="component" value="Chromosome 1"/>
</dbReference>
<dbReference type="GO" id="GO:0080146">
    <property type="term" value="F:L-cysteine desulfhydrase activity"/>
    <property type="evidence" value="ECO:0007669"/>
    <property type="project" value="RHEA"/>
</dbReference>
<dbReference type="Gene3D" id="3.40.640.10">
    <property type="entry name" value="Type I PLP-dependent aspartate aminotransferase-like (Major domain)"/>
    <property type="match status" value="1"/>
</dbReference>
<dbReference type="InterPro" id="IPR000192">
    <property type="entry name" value="Aminotrans_V_dom"/>
</dbReference>
<dbReference type="InterPro" id="IPR015424">
    <property type="entry name" value="PyrdxlP-dep_Trfase"/>
</dbReference>
<dbReference type="InterPro" id="IPR015421">
    <property type="entry name" value="PyrdxlP-dep_Trfase_major"/>
</dbReference>
<dbReference type="PANTHER" id="PTHR43092">
    <property type="entry name" value="L-CYSTEINE DESULFHYDRASE"/>
    <property type="match status" value="1"/>
</dbReference>
<dbReference type="PANTHER" id="PTHR43092:SF5">
    <property type="entry name" value="L-CYSTEINE DESULFHYDRASE 2-RELATED"/>
    <property type="match status" value="1"/>
</dbReference>
<dbReference type="Pfam" id="PF00266">
    <property type="entry name" value="Aminotran_5"/>
    <property type="match status" value="1"/>
</dbReference>
<dbReference type="SUPFAM" id="SSF53383">
    <property type="entry name" value="PLP-dependent transferases"/>
    <property type="match status" value="1"/>
</dbReference>
<proteinExistence type="inferred from homology"/>
<reference key="1">
    <citation type="journal article" date="2002" name="Nature">
        <title>The genome sequence and structure of rice chromosome 1.</title>
        <authorList>
            <person name="Sasaki T."/>
            <person name="Matsumoto T."/>
            <person name="Yamamoto K."/>
            <person name="Sakata K."/>
            <person name="Baba T."/>
            <person name="Katayose Y."/>
            <person name="Wu J."/>
            <person name="Niimura Y."/>
            <person name="Cheng Z."/>
            <person name="Nagamura Y."/>
            <person name="Antonio B.A."/>
            <person name="Kanamori H."/>
            <person name="Hosokawa S."/>
            <person name="Masukawa M."/>
            <person name="Arikawa K."/>
            <person name="Chiden Y."/>
            <person name="Hayashi M."/>
            <person name="Okamoto M."/>
            <person name="Ando T."/>
            <person name="Aoki H."/>
            <person name="Arita K."/>
            <person name="Hamada M."/>
            <person name="Harada C."/>
            <person name="Hijishita S."/>
            <person name="Honda M."/>
            <person name="Ichikawa Y."/>
            <person name="Idonuma A."/>
            <person name="Iijima M."/>
            <person name="Ikeda M."/>
            <person name="Ikeno M."/>
            <person name="Ito S."/>
            <person name="Ito T."/>
            <person name="Ito Y."/>
            <person name="Ito Y."/>
            <person name="Iwabuchi A."/>
            <person name="Kamiya K."/>
            <person name="Karasawa W."/>
            <person name="Katagiri S."/>
            <person name="Kikuta A."/>
            <person name="Kobayashi N."/>
            <person name="Kono I."/>
            <person name="Machita K."/>
            <person name="Maehara T."/>
            <person name="Mizuno H."/>
            <person name="Mizubayashi T."/>
            <person name="Mukai Y."/>
            <person name="Nagasaki H."/>
            <person name="Nakashima M."/>
            <person name="Nakama Y."/>
            <person name="Nakamichi Y."/>
            <person name="Nakamura M."/>
            <person name="Namiki N."/>
            <person name="Negishi M."/>
            <person name="Ohta I."/>
            <person name="Ono N."/>
            <person name="Saji S."/>
            <person name="Sakai K."/>
            <person name="Shibata M."/>
            <person name="Shimokawa T."/>
            <person name="Shomura A."/>
            <person name="Song J."/>
            <person name="Takazaki Y."/>
            <person name="Terasawa K."/>
            <person name="Tsuji K."/>
            <person name="Waki K."/>
            <person name="Yamagata H."/>
            <person name="Yamane H."/>
            <person name="Yoshiki S."/>
            <person name="Yoshihara R."/>
            <person name="Yukawa K."/>
            <person name="Zhong H."/>
            <person name="Iwama H."/>
            <person name="Endo T."/>
            <person name="Ito H."/>
            <person name="Hahn J.H."/>
            <person name="Kim H.-I."/>
            <person name="Eun M.-Y."/>
            <person name="Yano M."/>
            <person name="Jiang J."/>
            <person name="Gojobori T."/>
        </authorList>
    </citation>
    <scope>NUCLEOTIDE SEQUENCE [LARGE SCALE GENOMIC DNA]</scope>
    <source>
        <strain>cv. Nipponbare</strain>
    </source>
</reference>
<reference key="2">
    <citation type="journal article" date="2005" name="Nature">
        <title>The map-based sequence of the rice genome.</title>
        <authorList>
            <consortium name="International rice genome sequencing project (IRGSP)"/>
        </authorList>
    </citation>
    <scope>NUCLEOTIDE SEQUENCE [LARGE SCALE GENOMIC DNA]</scope>
    <source>
        <strain>cv. Nipponbare</strain>
    </source>
</reference>
<reference key="3">
    <citation type="journal article" date="2008" name="Nucleic Acids Res.">
        <title>The rice annotation project database (RAP-DB): 2008 update.</title>
        <authorList>
            <consortium name="The rice annotation project (RAP)"/>
        </authorList>
    </citation>
    <scope>GENOME REANNOTATION</scope>
    <source>
        <strain>cv. Nipponbare</strain>
    </source>
</reference>
<reference key="4">
    <citation type="journal article" date="2013" name="Rice">
        <title>Improvement of the Oryza sativa Nipponbare reference genome using next generation sequence and optical map data.</title>
        <authorList>
            <person name="Kawahara Y."/>
            <person name="de la Bastide M."/>
            <person name="Hamilton J.P."/>
            <person name="Kanamori H."/>
            <person name="McCombie W.R."/>
            <person name="Ouyang S."/>
            <person name="Schwartz D.C."/>
            <person name="Tanaka T."/>
            <person name="Wu J."/>
            <person name="Zhou S."/>
            <person name="Childs K.L."/>
            <person name="Davidson R.M."/>
            <person name="Lin H."/>
            <person name="Quesada-Ocampo L."/>
            <person name="Vaillancourt B."/>
            <person name="Sakai H."/>
            <person name="Lee S.S."/>
            <person name="Kim J."/>
            <person name="Numa H."/>
            <person name="Itoh T."/>
            <person name="Buell C.R."/>
            <person name="Matsumoto T."/>
        </authorList>
    </citation>
    <scope>GENOME REANNOTATION</scope>
    <source>
        <strain>cv. Nipponbare</strain>
    </source>
</reference>
<feature type="chain" id="PRO_0000429506" description="Putative L-cysteine desulfhydrase 2">
    <location>
        <begin position="1"/>
        <end position="479"/>
    </location>
</feature>
<feature type="region of interest" description="Disordered" evidence="3">
    <location>
        <begin position="1"/>
        <end position="36"/>
    </location>
</feature>
<feature type="compositionally biased region" description="Low complexity" evidence="3">
    <location>
        <begin position="7"/>
        <end position="36"/>
    </location>
</feature>
<feature type="modified residue" description="N6-(pyridoxal phosphate)lysine" evidence="1">
    <location>
        <position position="270"/>
    </location>
</feature>
<accession>Q5JNT6</accession>
<accession>Q0JNH6</accession>
<evidence type="ECO:0000250" key="1"/>
<evidence type="ECO:0000250" key="2">
    <source>
        <dbReference type="UniProtKB" id="Q9M1R1"/>
    </source>
</evidence>
<evidence type="ECO:0000256" key="3">
    <source>
        <dbReference type="SAM" id="MobiDB-lite"/>
    </source>
</evidence>
<evidence type="ECO:0000305" key="4"/>
<comment type="function">
    <text evidence="2">Catalyzes the production of hydrogen sulfide (H2S) from cysteine.</text>
</comment>
<comment type="catalytic activity">
    <reaction>
        <text>L-cysteine + H2O = hydrogen sulfide + pyruvate + NH4(+) + H(+)</text>
        <dbReference type="Rhea" id="RHEA:24931"/>
        <dbReference type="ChEBI" id="CHEBI:15361"/>
        <dbReference type="ChEBI" id="CHEBI:15377"/>
        <dbReference type="ChEBI" id="CHEBI:15378"/>
        <dbReference type="ChEBI" id="CHEBI:28938"/>
        <dbReference type="ChEBI" id="CHEBI:29919"/>
        <dbReference type="ChEBI" id="CHEBI:35235"/>
        <dbReference type="EC" id="4.4.1.28"/>
    </reaction>
</comment>
<comment type="cofactor">
    <cofactor evidence="1">
        <name>pyridoxal 5'-phosphate</name>
        <dbReference type="ChEBI" id="CHEBI:597326"/>
    </cofactor>
</comment>
<comment type="similarity">
    <text evidence="4">Belongs to the class-V pyridoxal-phosphate-dependent aminotransferase family.</text>
</comment>
<name>LCYD2_ORYSJ</name>
<keyword id="KW-0456">Lyase</keyword>
<keyword id="KW-0663">Pyridoxal phosphate</keyword>
<keyword id="KW-1185">Reference proteome</keyword>
<sequence>MASLQSGGDAAANGVDADVDGAASPPSAKRPRAGAGAAAITDAEVRAEFAHHDRAVARLNNGTFGCCPASVLAARARWQRLFLSQPDAFYFHHLQPGLARSRAAVAAAVGAGDASEVSLVDNVTTAAAIIMQHVAWSFAEGDFARGDVVLMFLYTYCSIKNSIHAYVARAGATVVEVPLPFPVSSPDAIVAEFRAALAVARDGGRRRVRLAVIDHITAMPTVLIPVKELVAICREEGVDKVFVDAAHAVGQVPVDVRDIGADFYASNLHKWFFCPSAVAFIHTRKDDPVSSKLHHPVVSSEYGNGLPMESAWIGVRDYSAQLVVPDVVDFVNRFDGGVEGIRRRNHDKVVEMGTMLAAAWGTFLGTPPEMCGSMLMVGLPGSLGVGSEDDAVGLRTMLRKQFKVEVPLYYNSKAAAADAPPEMVKDGNGDPVTGYVRISHQVYNVREEYEALRDAVAKLVADGFTCRKLRPPEKEETLA</sequence>